<gene>
    <name type="primary">GDF5</name>
    <name type="synonym">BMP14</name>
    <name type="synonym">CDMP1</name>
</gene>
<reference key="1">
    <citation type="journal article" date="1994" name="Biochem. Biophys. Res. Commun.">
        <title>Cloning and expression of recombinant human growth/differentiation factor 5.</title>
        <authorList>
            <person name="Hoetten G."/>
            <person name="Neidhardt H."/>
            <person name="Jacobowsky B."/>
            <person name="Pohl J."/>
        </authorList>
    </citation>
    <scope>NUCLEOTIDE SEQUENCE [GENOMIC DNA]</scope>
    <scope>VARIANT SER-276</scope>
    <source>
        <tissue>Placenta</tissue>
    </source>
</reference>
<reference key="2">
    <citation type="journal article" date="1994" name="J. Biol. Chem.">
        <title>Cartilage-derived morphogenetic proteins. New members of the transforming growth factor-beta superfamily predominantly expressed in long bones during human embryonic development.</title>
        <authorList>
            <person name="Chang S."/>
            <person name="Hoang B."/>
            <person name="Thomas J.T."/>
            <person name="Vukicevic S."/>
            <person name="Luyten F.P."/>
            <person name="Ryba N.J.P."/>
            <person name="Kozak C.A."/>
            <person name="Reddi A.H."/>
            <person name="Moos M."/>
        </authorList>
    </citation>
    <scope>NUCLEOTIDE SEQUENCE [MRNA]</scope>
    <source>
        <tissue>Articular cartilage</tissue>
    </source>
</reference>
<reference key="3">
    <citation type="journal article" date="2001" name="Nature">
        <title>The DNA sequence and comparative analysis of human chromosome 20.</title>
        <authorList>
            <person name="Deloukas P."/>
            <person name="Matthews L.H."/>
            <person name="Ashurst J.L."/>
            <person name="Burton J."/>
            <person name="Gilbert J.G.R."/>
            <person name="Jones M."/>
            <person name="Stavrides G."/>
            <person name="Almeida J.P."/>
            <person name="Babbage A.K."/>
            <person name="Bagguley C.L."/>
            <person name="Bailey J."/>
            <person name="Barlow K.F."/>
            <person name="Bates K.N."/>
            <person name="Beard L.M."/>
            <person name="Beare D.M."/>
            <person name="Beasley O.P."/>
            <person name="Bird C.P."/>
            <person name="Blakey S.E."/>
            <person name="Bridgeman A.M."/>
            <person name="Brown A.J."/>
            <person name="Buck D."/>
            <person name="Burrill W.D."/>
            <person name="Butler A.P."/>
            <person name="Carder C."/>
            <person name="Carter N.P."/>
            <person name="Chapman J.C."/>
            <person name="Clamp M."/>
            <person name="Clark G."/>
            <person name="Clark L.N."/>
            <person name="Clark S.Y."/>
            <person name="Clee C.M."/>
            <person name="Clegg S."/>
            <person name="Cobley V.E."/>
            <person name="Collier R.E."/>
            <person name="Connor R.E."/>
            <person name="Corby N.R."/>
            <person name="Coulson A."/>
            <person name="Coville G.J."/>
            <person name="Deadman R."/>
            <person name="Dhami P.D."/>
            <person name="Dunn M."/>
            <person name="Ellington A.G."/>
            <person name="Frankland J.A."/>
            <person name="Fraser A."/>
            <person name="French L."/>
            <person name="Garner P."/>
            <person name="Grafham D.V."/>
            <person name="Griffiths C."/>
            <person name="Griffiths M.N.D."/>
            <person name="Gwilliam R."/>
            <person name="Hall R.E."/>
            <person name="Hammond S."/>
            <person name="Harley J.L."/>
            <person name="Heath P.D."/>
            <person name="Ho S."/>
            <person name="Holden J.L."/>
            <person name="Howden P.J."/>
            <person name="Huckle E."/>
            <person name="Hunt A.R."/>
            <person name="Hunt S.E."/>
            <person name="Jekosch K."/>
            <person name="Johnson C.M."/>
            <person name="Johnson D."/>
            <person name="Kay M.P."/>
            <person name="Kimberley A.M."/>
            <person name="King A."/>
            <person name="Knights A."/>
            <person name="Laird G.K."/>
            <person name="Lawlor S."/>
            <person name="Lehvaeslaiho M.H."/>
            <person name="Leversha M.A."/>
            <person name="Lloyd C."/>
            <person name="Lloyd D.M."/>
            <person name="Lovell J.D."/>
            <person name="Marsh V.L."/>
            <person name="Martin S.L."/>
            <person name="McConnachie L.J."/>
            <person name="McLay K."/>
            <person name="McMurray A.A."/>
            <person name="Milne S.A."/>
            <person name="Mistry D."/>
            <person name="Moore M.J.F."/>
            <person name="Mullikin J.C."/>
            <person name="Nickerson T."/>
            <person name="Oliver K."/>
            <person name="Parker A."/>
            <person name="Patel R."/>
            <person name="Pearce T.A.V."/>
            <person name="Peck A.I."/>
            <person name="Phillimore B.J.C.T."/>
            <person name="Prathalingam S.R."/>
            <person name="Plumb R.W."/>
            <person name="Ramsay H."/>
            <person name="Rice C.M."/>
            <person name="Ross M.T."/>
            <person name="Scott C.E."/>
            <person name="Sehra H.K."/>
            <person name="Shownkeen R."/>
            <person name="Sims S."/>
            <person name="Skuce C.D."/>
            <person name="Smith M.L."/>
            <person name="Soderlund C."/>
            <person name="Steward C.A."/>
            <person name="Sulston J.E."/>
            <person name="Swann R.M."/>
            <person name="Sycamore N."/>
            <person name="Taylor R."/>
            <person name="Tee L."/>
            <person name="Thomas D.W."/>
            <person name="Thorpe A."/>
            <person name="Tracey A."/>
            <person name="Tromans A.C."/>
            <person name="Vaudin M."/>
            <person name="Wall M."/>
            <person name="Wallis J.M."/>
            <person name="Whitehead S.L."/>
            <person name="Whittaker P."/>
            <person name="Willey D.L."/>
            <person name="Williams L."/>
            <person name="Williams S.A."/>
            <person name="Wilming L."/>
            <person name="Wray P.W."/>
            <person name="Hubbard T."/>
            <person name="Durbin R.M."/>
            <person name="Bentley D.R."/>
            <person name="Beck S."/>
            <person name="Rogers J."/>
        </authorList>
    </citation>
    <scope>NUCLEOTIDE SEQUENCE [LARGE SCALE GENOMIC DNA]</scope>
</reference>
<reference key="4">
    <citation type="submission" date="2005-09" db="EMBL/GenBank/DDBJ databases">
        <authorList>
            <person name="Mural R.J."/>
            <person name="Istrail S."/>
            <person name="Sutton G.G."/>
            <person name="Florea L."/>
            <person name="Halpern A.L."/>
            <person name="Mobarry C.M."/>
            <person name="Lippert R."/>
            <person name="Walenz B."/>
            <person name="Shatkay H."/>
            <person name="Dew I."/>
            <person name="Miller J.R."/>
            <person name="Flanigan M.J."/>
            <person name="Edwards N.J."/>
            <person name="Bolanos R."/>
            <person name="Fasulo D."/>
            <person name="Halldorsson B.V."/>
            <person name="Hannenhalli S."/>
            <person name="Turner R."/>
            <person name="Yooseph S."/>
            <person name="Lu F."/>
            <person name="Nusskern D.R."/>
            <person name="Shue B.C."/>
            <person name="Zheng X.H."/>
            <person name="Zhong F."/>
            <person name="Delcher A.L."/>
            <person name="Huson D.H."/>
            <person name="Kravitz S.A."/>
            <person name="Mouchard L."/>
            <person name="Reinert K."/>
            <person name="Remington K.A."/>
            <person name="Clark A.G."/>
            <person name="Waterman M.S."/>
            <person name="Eichler E.E."/>
            <person name="Adams M.D."/>
            <person name="Hunkapiller M.W."/>
            <person name="Myers E.W."/>
            <person name="Venter J.C."/>
        </authorList>
    </citation>
    <scope>NUCLEOTIDE SEQUENCE [LARGE SCALE GENOMIC DNA]</scope>
</reference>
<reference key="5">
    <citation type="journal article" date="2004" name="Genome Res.">
        <title>The status, quality, and expansion of the NIH full-length cDNA project: the Mammalian Gene Collection (MGC).</title>
        <authorList>
            <consortium name="The MGC Project Team"/>
        </authorList>
    </citation>
    <scope>NUCLEOTIDE SEQUENCE [LARGE SCALE MRNA]</scope>
    <scope>VARIANT SER-276</scope>
    <source>
        <tissue>Brain</tissue>
    </source>
</reference>
<reference key="6">
    <citation type="journal article" date="1996" name="Nat. Genet.">
        <title>A human chondrodysplasia due to a mutation in a TGF-beta superfamily member.</title>
        <authorList>
            <person name="Thomas J.T."/>
            <person name="Lin K."/>
            <person name="Nandedkar M."/>
            <person name="Camargo M."/>
            <person name="Cervenka J."/>
            <person name="Luyten F.P."/>
        </authorList>
    </citation>
    <scope>INVOLVEMENT IN AMD2C</scope>
</reference>
<reference key="7">
    <citation type="journal article" date="2001" name="Nat. Immunol.">
        <title>A CD14-independent LPS receptor cluster.</title>
        <authorList>
            <person name="Triantafilou K."/>
            <person name="Triantafilou M."/>
            <person name="Dedrick R.L."/>
        </authorList>
    </citation>
    <scope>FUNCTION</scope>
    <scope>IDENTIFICATION AS LPS RECEPTOR</scope>
    <scope>INTERACTION WITH CXCR4; HSP90AA1 AND HSPA8</scope>
    <scope>SUBCELLULAR LOCATION</scope>
    <scope>TISSUE SPECIFICITY</scope>
</reference>
<reference key="8">
    <citation type="journal article" date="2004" name="Biochem. Biophys. Res. Commun.">
        <title>Cartilage-derived morphogenetic protein-1 promotes the differentiation of mesenchymal stem cells into chondrocytes.</title>
        <authorList>
            <person name="Bai X."/>
            <person name="Xiao Z."/>
            <person name="Pan Y."/>
            <person name="Hu J."/>
            <person name="Pohl J."/>
            <person name="Wen J."/>
            <person name="Li L."/>
        </authorList>
    </citation>
    <scope>FUNCTION</scope>
</reference>
<reference key="9">
    <citation type="journal article" date="2008" name="J. Biol. Chem.">
        <title>Targeting of bone morphogenetic protein growth factor complexes to fibrillin.</title>
        <authorList>
            <person name="Sengle G."/>
            <person name="Charbonneau N.L."/>
            <person name="Ono R.N."/>
            <person name="Sasaki T."/>
            <person name="Alvarez J."/>
            <person name="Keene D.R."/>
            <person name="Baechinger H.P."/>
            <person name="Sakai L.Y."/>
        </authorList>
    </citation>
    <scope>INTERACTION WITH FBN1 AND FBN2</scope>
</reference>
<reference key="10">
    <citation type="journal article" date="2008" name="J. Biol. Chem.">
        <title>Bone morphogenetic proteins signal through the transforming growth factor-beta type III receptor.</title>
        <authorList>
            <person name="Kirkbride K.C."/>
            <person name="Townsend T.A."/>
            <person name="Bruinsma M.W."/>
            <person name="Barnett J.V."/>
            <person name="Blobe G.C."/>
        </authorList>
    </citation>
    <scope>INTERACTION WITH TGFBR3</scope>
</reference>
<reference key="11">
    <citation type="journal article" date="2009" name="PLoS Genet.">
        <title>Mutations in GDF5 reveal a key residue mediating BMP inhibition by NOGGIN.</title>
        <authorList>
            <person name="Seemann P."/>
            <person name="Brehm A."/>
            <person name="Koenig J."/>
            <person name="Reissner C."/>
            <person name="Stricker S."/>
            <person name="Kuss P."/>
            <person name="Haupt J."/>
            <person name="Renninger S."/>
            <person name="Nickel J."/>
            <person name="Sebald W."/>
            <person name="Groppe J.C."/>
            <person name="Ploeger F."/>
            <person name="Pohl J."/>
            <person name="Schmidt-von Kegler M."/>
            <person name="Walther M."/>
            <person name="Gassner I."/>
            <person name="Rusu C."/>
            <person name="Janecke A.R."/>
            <person name="Dathe K."/>
            <person name="Mundlos S."/>
        </authorList>
    </citation>
    <scope>INTERACTION WITH NOG</scope>
    <scope>FUNCTION</scope>
    <scope>VARIANTS SYNS2 LYS-445 AND THR-445</scope>
    <scope>CHARACTERIZATION OF VARIANT SYNS2 THR-445</scope>
</reference>
<reference key="12">
    <citation type="journal article" date="2012" name="J. Bone Miner. Res.">
        <title>New insights into the molecular mechanism of multiple synostoses syndrome (SYNS): mutation within the GDF5 knuckle epitope causes noggin-resistance.</title>
        <authorList>
            <person name="Schwaerzer G.K."/>
            <person name="Hiepen C."/>
            <person name="Schrewe H."/>
            <person name="Nickel J."/>
            <person name="Ploeger F."/>
            <person name="Sebald W."/>
            <person name="Mueller T."/>
            <person name="Knaus P."/>
        </authorList>
    </citation>
    <scope>INTERACTION WITH BMPR2; NOG; BMPR1A AND BMPR1B</scope>
    <scope>FUNCTION</scope>
    <scope>VARIANT BDA2 PRO-441</scope>
    <scope>VARIANT SYNS2 ASN-475</scope>
    <scope>CHARACTERIZATION OF VARIANT SYNS2 ASN-475</scope>
    <scope>CHARACTERIZATION OF VARIANT BDA2 PRO-441</scope>
</reference>
<reference key="13">
    <citation type="journal article" date="2013" name="PLoS Genet.">
        <title>A GDF5 point mutation strikes twice--causing BDA1 and SYNS2.</title>
        <authorList>
            <person name="Degenkolbe E."/>
            <person name="Konig J."/>
            <person name="Zimmer J."/>
            <person name="Walther M."/>
            <person name="Reissner C."/>
            <person name="Nickel J."/>
            <person name="Ploger F."/>
            <person name="Raspopovic J."/>
            <person name="Sharpe J."/>
            <person name="Dathe K."/>
            <person name="Hecht J.T."/>
            <person name="Mundlos S."/>
            <person name="Doelken S.C."/>
            <person name="Seemann P."/>
        </authorList>
    </citation>
    <scope>INTERACTION WITH NOG; BMPR1B AND BMPR1A</scope>
    <scope>FUNCTION</scope>
    <scope>VARIANT SYNS2 ARG-414</scope>
    <scope>CHARACTERIZATION OF VARIANT SYNS2 ARG-414</scope>
    <scope>VARIANT BDA1C ARG-414</scope>
    <scope>CHARACTERIZATION OF VARIANTS BDA1C CYS-399 AND ARG-414</scope>
</reference>
<reference key="14">
    <citation type="journal article" date="2014" name="J. Mol. Biol.">
        <title>Molecular analysis of two novel missense mutations in the GDF5 proregion that reduce protein activity and are associated with brachydactyly type C.</title>
        <authorList>
            <person name="Stange K."/>
            <person name="Thieme T."/>
            <person name="Hertel K."/>
            <person name="Kuhfahl S."/>
            <person name="Janecke A.R."/>
            <person name="Piza-Katzer H."/>
            <person name="Penttinen M."/>
            <person name="Hietala M."/>
            <person name="Dathe K."/>
            <person name="Mundlos S."/>
            <person name="Schwarz E."/>
            <person name="Seemann P."/>
        </authorList>
    </citation>
    <scope>FUNCTION</scope>
    <scope>VARIANTS BDC PRO-201 AND PRO-263</scope>
    <scope>CHARACTERIZATION OF VARIANTS BDC PRO-201 AND PRO-263</scope>
</reference>
<reference key="15">
    <citation type="journal article" date="2016" name="J. Bone Miner. Res.">
        <title>A New Subtype of Multiple-Synostoses Syndrome is Caused by a Mutation in GDF6 that Decreases its Sensitivity to Noggin and Enhances its Potency as a BMP Signal.</title>
        <authorList>
            <person name="Wang J."/>
            <person name="Yu T."/>
            <person name="Wang Z."/>
            <person name="Ohte S."/>
            <person name="Yao R.E."/>
            <person name="Zheng Z."/>
            <person name="Geng J."/>
            <person name="Cai H."/>
            <person name="Ge Y."/>
            <person name="Li Y."/>
            <person name="Xu Y."/>
            <person name="Zhang Q."/>
            <person name="Gusella J.F."/>
            <person name="Fu Q."/>
            <person name="Pregizer S."/>
            <person name="Rosen V."/>
            <person name="Shen Y."/>
        </authorList>
    </citation>
    <scope>MUTAGENESIS OF TYR-490</scope>
</reference>
<reference key="16">
    <citation type="journal article" date="2012" name="Eur. J. Med. Genet.">
        <title>A novel mutation in CDMP1 causes brachydactyly type C with 'angel-shaped phalanx'. A genotype-phenotype correlation in the mutational spectrum.</title>
        <authorList>
            <person name="Gutierrez-Amavizca B.E."/>
            <person name="Brambila-Tapia A.J."/>
            <person name="Juarez-Vazquez C.I."/>
            <person name="Holder-Espinasse M."/>
            <person name="Manouvrier-Hanu S."/>
            <person name="Escande F."/>
            <person name="Barros-Nunez P."/>
        </authorList>
    </citation>
    <scope>INVOLVEMENT IN BDC</scope>
</reference>
<reference key="17">
    <citation type="journal article" date="2009" name="EMBO J.">
        <title>Crystal structure analysis reveals a spring-loaded latch as molecular mechanism for GDF-5-type I receptor specificity.</title>
        <authorList>
            <person name="Kotzsch A."/>
            <person name="Nickel J."/>
            <person name="Seher A."/>
            <person name="Sebald W."/>
            <person name="Muller T.D."/>
        </authorList>
    </citation>
    <scope>X-RAY CRYSTALLOGRAPHY (2.1 ANGSTROMS) OF 387-501 IN COMPLEX WITH MOUSE BMPR1B</scope>
    <scope>FUNCTION</scope>
    <scope>DISULFIDE BONDS</scope>
</reference>
<reference key="18">
    <citation type="journal article" date="1997" name="Nat. Genet.">
        <title>Disruption of human limb morphogenesis by a dominant negative mutation in CDMP1.</title>
        <authorList>
            <person name="Thomas J.T."/>
            <person name="Kilpatrick M.W."/>
            <person name="Lin K."/>
            <person name="Erlacher L."/>
            <person name="Lembessis P."/>
            <person name="Costa T."/>
            <person name="Tsipouras P."/>
            <person name="Luyten F.P."/>
        </authorList>
    </citation>
    <scope>VARIANT AMD2A TYR-400</scope>
</reference>
<reference key="19">
    <citation type="journal article" date="1999" name="Am. J. Hum. Genet.">
        <title>Multiple synostosis type 2 (SYNS2) maps to 20q11.2 and caused by a missense mutation in the growth/differentiation factor 5 (GDF5).</title>
        <authorList>
            <person name="Akarsu A.N."/>
            <person name="Rezaie T."/>
            <person name="Demirtas M."/>
            <person name="Farhud D.D."/>
            <person name="Sarfarazi M."/>
        </authorList>
    </citation>
    <scope>VARIANT SYNS2 ASN-475</scope>
</reference>
<reference key="20">
    <citation type="journal article" date="2002" name="Clin. Genet.">
        <title>Mutation in the cartilage-derived morphogenetic protein-1 (CDMP1) gene in a kindred affected with fibular hypoplasia and complex brachydactyly (DuPan syndrome).</title>
        <authorList>
            <person name="Faiyaz-Ul-Haque M."/>
            <person name="Ahmad W."/>
            <person name="Zaidi S.H.E."/>
            <person name="Haque S."/>
            <person name="Teebi A.S."/>
            <person name="Ahmad M."/>
            <person name="Cohn D.H."/>
            <person name="Tsui L.-C."/>
        </authorList>
    </citation>
    <scope>VARIANT AMD2B PRO-441</scope>
</reference>
<reference key="21">
    <citation type="journal article" date="2004" name="Am. J. Med. Genet. A">
        <title>Brachydactyly type C caused by a homozygous missense mutation in the prodomain of CDMP1.</title>
        <authorList>
            <person name="Schwabe G.C."/>
            <person name="Tuerkmen S."/>
            <person name="Leschik G."/>
            <person name="Palanduz S."/>
            <person name="Stoever B."/>
            <person name="Goecke T.O."/>
            <person name="Mundlos S."/>
        </authorList>
    </citation>
    <scope>VARIANT BDC VAL-173</scope>
</reference>
<reference key="22">
    <citation type="journal article" date="2005" name="Am. J. Med. Genet. A">
        <title>Du Pan syndrome phenotype caused by heterozygous pathogenic mutations in CDMP1 gene.</title>
        <authorList>
            <person name="Szczaluba K."/>
            <person name="Hilbert K."/>
            <person name="Obersztyn E."/>
            <person name="Zabel B."/>
            <person name="Mazurczak T."/>
            <person name="Kozlowski K."/>
        </authorList>
    </citation>
    <scope>VARIANTS AMD2B LEU-437 DEL; THR-439 AND LEU-440</scope>
</reference>
<reference key="23">
    <citation type="journal article" date="2005" name="J. Clin. Invest.">
        <title>Activating and deactivating mutations in the receptor interaction site of GDF5 cause symphalangism or brachydactyly type A2.</title>
        <authorList>
            <person name="Seemann P."/>
            <person name="Schwappacher R."/>
            <person name="Kjaer K.W."/>
            <person name="Krakow D."/>
            <person name="Lehmann K."/>
            <person name="Dawson K."/>
            <person name="Stricker S."/>
            <person name="Pohl J."/>
            <person name="Ploeger F."/>
            <person name="Staub E."/>
            <person name="Nickel J."/>
            <person name="Sebald W."/>
            <person name="Knaus P."/>
            <person name="Mundlos S."/>
        </authorList>
    </citation>
    <scope>VARIANT SYM1B LEU-438</scope>
    <scope>VARIANT BDA2 PRO-441</scope>
    <scope>CHARACTERIZATION OF VARIANT SYM1B LEU-438</scope>
    <scope>CHARACTERIZATION OF VARIANT BDA2 PRO-441</scope>
</reference>
<reference key="24">
    <citation type="journal article" date="2006" name="Am. J. Hum. Genet.">
        <title>GDF5 is a second locus for multiple-synostosis syndrome.</title>
        <authorList>
            <person name="Dawson K."/>
            <person name="Seeman P."/>
            <person name="Sebald E."/>
            <person name="King L."/>
            <person name="Edwards M."/>
            <person name="Williams J. III"/>
            <person name="Mundlos S."/>
            <person name="Krakow D."/>
        </authorList>
    </citation>
    <scope>VARIANT SYNS2 LEU-438</scope>
</reference>
<reference key="25">
    <citation type="journal article" date="2006" name="Am. J. Med. Genet. A">
        <title>A novel mutation in GDF5 causes autosomal dominant symphalangism in two Chinese families.</title>
        <authorList>
            <person name="Wang X."/>
            <person name="Xiao F."/>
            <person name="Yang Q."/>
            <person name="Liang B."/>
            <person name="Tang Z."/>
            <person name="Jiang L."/>
            <person name="Zhu Q."/>
            <person name="Chang W."/>
            <person name="Jiang J."/>
            <person name="Jiang C."/>
            <person name="Ren X."/>
            <person name="Liu J.-Y."/>
            <person name="Wang Q.K."/>
            <person name="Liu M."/>
        </authorList>
    </citation>
    <scope>VARIANT SYM1B LYS-491</scope>
</reference>
<reference key="26">
    <citation type="journal article" date="2007" name="Nat. Genet.">
        <title>A functional polymorphism in the 5' UTR of GDF5 is associated with susceptibility to osteoarthritis.</title>
        <authorList>
            <person name="Miyamoto Y."/>
            <person name="Mabuchi A."/>
            <person name="Shi D."/>
            <person name="Kubo T."/>
            <person name="Takatori Y."/>
            <person name="Saito S."/>
            <person name="Fujioka M."/>
            <person name="Sudo A."/>
            <person name="Uchida A."/>
            <person name="Yamamoto S."/>
            <person name="Ozaki K."/>
            <person name="Takigawa M."/>
            <person name="Tanaka T."/>
            <person name="Nakamura Y."/>
            <person name="Jiang Q."/>
            <person name="Ikegawa S."/>
        </authorList>
    </citation>
    <scope>INVOLVEMENT IN OS5</scope>
</reference>
<reference key="27">
    <citation type="journal article" date="2008" name="Am. J. Med. Genet. A">
        <title>Compound heterozygosity for GDF5 in Du Pan type chondrodysplasia.</title>
        <authorList>
            <person name="Douzgou S."/>
            <person name="Lehmann K."/>
            <person name="Mingarelli R."/>
            <person name="Mundlos S."/>
            <person name="Dallapiccola B."/>
        </authorList>
    </citation>
    <scope>VARIANTS AMD2B GLN-378 AND THR-436</scope>
</reference>
<reference key="28">
    <citation type="journal article" date="2008" name="Hum. Mol. Genet.">
        <title>Brachydactyly type A2 associated with a defect in proGDF5 processing.</title>
        <authorList>
            <person name="Ploeger F."/>
            <person name="Seemann P."/>
            <person name="Schmidt-von Kegler M."/>
            <person name="Lehmann K."/>
            <person name="Seidel J."/>
            <person name="Kjaer K.W."/>
            <person name="Pohl J."/>
            <person name="Mundlos S."/>
        </authorList>
    </citation>
    <scope>VARIANT BDA2 GLN-380</scope>
    <scope>CHARACTERIZATION OF VARIANT BDA2 GLN-380</scope>
</reference>
<reference key="29">
    <citation type="journal article" date="2008" name="J. Hum. Genet.">
        <title>Novel point mutations in GDF5 associated with two distinct limb malformations in Chinese: brachydactyly type C and proximal symphalangism.</title>
        <authorList>
            <person name="Yang W."/>
            <person name="Cao L."/>
            <person name="Liu W."/>
            <person name="Jiang L."/>
            <person name="Sun M."/>
            <person name="Zhang D."/>
            <person name="Wang S."/>
            <person name="Lo W.H."/>
            <person name="Luo Y."/>
            <person name="Zhang X."/>
        </authorList>
    </citation>
    <scope>VARIANT SYM1B ARG-373</scope>
    <scope>CHARACTERIZATION OF VARIANT SYM1B ARG-373</scope>
</reference>
<reference key="30">
    <citation type="journal article" date="2010" name="Hum. Mutat.">
        <title>Mutations in GDF5 presenting as semidominant brachydactyly A1.</title>
        <authorList>
            <person name="Byrnes A.M."/>
            <person name="Racacho L."/>
            <person name="Nikkel S.M."/>
            <person name="Xiao F."/>
            <person name="MacDonald H."/>
            <person name="Underhill T.M."/>
            <person name="Bulman D.E."/>
        </authorList>
    </citation>
    <scope>VARIANT BDA1C CYS-399</scope>
    <scope>CHARACTERIZATION OF VARIANT BDA1C CYS-399</scope>
</reference>
<reference key="31">
    <citation type="journal article" date="2015" name="Am. J. Med. Genet. A">
        <title>Two novel homozygous missense mutations in the GDF5 gene cause brachydactyly type C.</title>
        <authorList>
            <person name="Al-Qattan M.M."/>
            <person name="Al-Motairi M.I."/>
            <person name="Al Balwi M.A."/>
        </authorList>
    </citation>
    <scope>VARIANTS BDC ASN-203 AND MET-486</scope>
</reference>
<name>GDF5_HUMAN</name>
<sequence length="501" mass="55395">MRLPKLLTFLLWYLAWLDLEFICTVLGAPDLGQRPQGTRPGLAKAEAKERPPLARNVFRPGGHSYGGGATNANARAKGGTGQTGGLTQPKKDEPKKLPPRPGGPEPKPGHPPQTRQATARTVTPKGQLPGGKAPPKAGSVPSSFLLKKAREPGPPREPKEPFRPPPITPHEYMLSLYRTLSDADRKGGNSSVKLEAGLANTITSFIDKGQDDRGPVVRKQRYVFDISALEKDGLLGAELRILRKKPSDTAKPAAPGGGRAAQLKLSSCPSGRQPAALLDVRSVPGLDGSGWEVFDIWKLFRNFKNSAQLCLELEAWERGRAVDLRGLGFDRAARQVHEKALFLVFGRTKKRDLFFNEIKARSGQDDKTVYEYLFSQRRKRRAPLATRQGKRPSKNLKARCSRKALHVNFKDMGWDDWIIAPLEYEAFHCEGLCEFPLRSHLEPTNHAVIQTLMNSMDPESTPPTCCVPTRLSPISILFIDSANNVVYKQYEDMVVESCGCR</sequence>
<organism>
    <name type="scientific">Homo sapiens</name>
    <name type="common">Human</name>
    <dbReference type="NCBI Taxonomy" id="9606"/>
    <lineage>
        <taxon>Eukaryota</taxon>
        <taxon>Metazoa</taxon>
        <taxon>Chordata</taxon>
        <taxon>Craniata</taxon>
        <taxon>Vertebrata</taxon>
        <taxon>Euteleostomi</taxon>
        <taxon>Mammalia</taxon>
        <taxon>Eutheria</taxon>
        <taxon>Euarchontoglires</taxon>
        <taxon>Primates</taxon>
        <taxon>Haplorrhini</taxon>
        <taxon>Catarrhini</taxon>
        <taxon>Hominidae</taxon>
        <taxon>Homo</taxon>
    </lineage>
</organism>
<protein>
    <recommendedName>
        <fullName>Growth/differentiation factor 5</fullName>
        <shortName>GDF-5</shortName>
    </recommendedName>
    <alternativeName>
        <fullName>Bone morphogenetic protein 14</fullName>
        <shortName>BMP-14</shortName>
    </alternativeName>
    <alternativeName>
        <fullName>Cartilage-derived morphogenetic protein 1</fullName>
        <shortName>CDMP-1</shortName>
    </alternativeName>
    <alternativeName>
        <fullName>Lipopolysaccharide-associated protein 4</fullName>
        <shortName>LAP-4</shortName>
        <shortName>LPS-associated protein 4</shortName>
    </alternativeName>
    <alternativeName>
        <fullName>Radotermin</fullName>
    </alternativeName>
</protein>
<proteinExistence type="evidence at protein level"/>
<keyword id="KW-0002">3D-structure</keyword>
<keyword id="KW-1003">Cell membrane</keyword>
<keyword id="KW-0891">Chondrogenesis</keyword>
<keyword id="KW-0165">Cleavage on pair of basic residues</keyword>
<keyword id="KW-0202">Cytokine</keyword>
<keyword id="KW-0225">Disease variant</keyword>
<keyword id="KW-1015">Disulfide bond</keyword>
<keyword id="KW-0242">Dwarfism</keyword>
<keyword id="KW-0325">Glycoprotein</keyword>
<keyword id="KW-0339">Growth factor</keyword>
<keyword id="KW-0472">Membrane</keyword>
<keyword id="KW-1267">Proteomics identification</keyword>
<keyword id="KW-1185">Reference proteome</keyword>
<keyword id="KW-0964">Secreted</keyword>
<keyword id="KW-0732">Signal</keyword>
<accession>P43026</accession>
<accession>E1P5Q2</accession>
<accession>Q96SB1</accession>
<dbReference type="EMBL" id="X80915">
    <property type="protein sequence ID" value="CAA56874.1"/>
    <property type="molecule type" value="Genomic_DNA"/>
</dbReference>
<dbReference type="EMBL" id="U13660">
    <property type="protein sequence ID" value="AAA57007.1"/>
    <property type="molecule type" value="mRNA"/>
</dbReference>
<dbReference type="EMBL" id="AL121586">
    <property type="protein sequence ID" value="CAB89416.1"/>
    <property type="status" value="ALT_SEQ"/>
    <property type="molecule type" value="Genomic_DNA"/>
</dbReference>
<dbReference type="EMBL" id="FO393401">
    <property type="status" value="NOT_ANNOTATED_CDS"/>
    <property type="molecule type" value="Genomic_DNA"/>
</dbReference>
<dbReference type="EMBL" id="CH471077">
    <property type="protein sequence ID" value="EAW76208.1"/>
    <property type="molecule type" value="Genomic_DNA"/>
</dbReference>
<dbReference type="EMBL" id="CH471077">
    <property type="protein sequence ID" value="EAW76209.1"/>
    <property type="molecule type" value="Genomic_DNA"/>
</dbReference>
<dbReference type="EMBL" id="BC032495">
    <property type="protein sequence ID" value="AAH32495.1"/>
    <property type="molecule type" value="mRNA"/>
</dbReference>
<dbReference type="CCDS" id="CCDS13254.1"/>
<dbReference type="PIR" id="A55452">
    <property type="entry name" value="A55452"/>
</dbReference>
<dbReference type="PIR" id="JC2347">
    <property type="entry name" value="JC2347"/>
</dbReference>
<dbReference type="RefSeq" id="NP_000548.2">
    <property type="nucleotide sequence ID" value="NM_000557.5"/>
</dbReference>
<dbReference type="RefSeq" id="NP_001306067.1">
    <property type="nucleotide sequence ID" value="NM_001319138.2"/>
</dbReference>
<dbReference type="RefSeq" id="XP_011527377.1">
    <property type="nucleotide sequence ID" value="XM_011529075.2"/>
</dbReference>
<dbReference type="PDB" id="1WAQ">
    <property type="method" value="X-ray"/>
    <property type="resolution" value="2.28 A"/>
    <property type="chains" value="A=387-501"/>
</dbReference>
<dbReference type="PDB" id="2BHK">
    <property type="method" value="X-ray"/>
    <property type="resolution" value="2.40 A"/>
    <property type="chains" value="A=382-501"/>
</dbReference>
<dbReference type="PDB" id="3EVS">
    <property type="method" value="X-ray"/>
    <property type="resolution" value="2.10 A"/>
    <property type="chains" value="B=387-501"/>
</dbReference>
<dbReference type="PDB" id="3QB4">
    <property type="method" value="X-ray"/>
    <property type="resolution" value="2.28 A"/>
    <property type="chains" value="A/C=387-501"/>
</dbReference>
<dbReference type="PDB" id="5HK5">
    <property type="method" value="X-ray"/>
    <property type="resolution" value="2.90 A"/>
    <property type="chains" value="A/B/C/D=382-501"/>
</dbReference>
<dbReference type="PDB" id="6Z3G">
    <property type="method" value="X-ray"/>
    <property type="resolution" value="2.78 A"/>
    <property type="chains" value="A=387-501"/>
</dbReference>
<dbReference type="PDB" id="6Z3H">
    <property type="method" value="X-ray"/>
    <property type="resolution" value="3.16 A"/>
    <property type="chains" value="A=387-501"/>
</dbReference>
<dbReference type="PDB" id="6Z3J">
    <property type="method" value="X-ray"/>
    <property type="resolution" value="1.65 A"/>
    <property type="chains" value="A/B=387-501"/>
</dbReference>
<dbReference type="PDB" id="6Z3L">
    <property type="method" value="X-ray"/>
    <property type="resolution" value="2.51 A"/>
    <property type="chains" value="A=387-501"/>
</dbReference>
<dbReference type="PDB" id="6Z3M">
    <property type="method" value="X-ray"/>
    <property type="resolution" value="5.50 A"/>
    <property type="chains" value="A/B/G/H/M/N=387-501"/>
</dbReference>
<dbReference type="PDB" id="7ZJF">
    <property type="method" value="X-ray"/>
    <property type="resolution" value="1.30 A"/>
    <property type="chains" value="A/B=382-501"/>
</dbReference>
<dbReference type="PDB" id="8BWL">
    <property type="method" value="X-ray"/>
    <property type="resolution" value="1.96 A"/>
    <property type="chains" value="A/B=382-501"/>
</dbReference>
<dbReference type="PDB" id="8BWM">
    <property type="method" value="X-ray"/>
    <property type="resolution" value="2.50 A"/>
    <property type="chains" value="A/B=382-501"/>
</dbReference>
<dbReference type="PDB" id="8BWN">
    <property type="method" value="X-ray"/>
    <property type="resolution" value="2.57 A"/>
    <property type="chains" value="A/B=382-501"/>
</dbReference>
<dbReference type="PDB" id="8E3G">
    <property type="method" value="X-ray"/>
    <property type="resolution" value="2.80 A"/>
    <property type="chains" value="B/D=382-501"/>
</dbReference>
<dbReference type="PDBsum" id="1WAQ"/>
<dbReference type="PDBsum" id="2BHK"/>
<dbReference type="PDBsum" id="3EVS"/>
<dbReference type="PDBsum" id="3QB4"/>
<dbReference type="PDBsum" id="5HK5"/>
<dbReference type="PDBsum" id="6Z3G"/>
<dbReference type="PDBsum" id="6Z3H"/>
<dbReference type="PDBsum" id="6Z3J"/>
<dbReference type="PDBsum" id="6Z3L"/>
<dbReference type="PDBsum" id="6Z3M"/>
<dbReference type="PDBsum" id="7ZJF"/>
<dbReference type="PDBsum" id="8BWL"/>
<dbReference type="PDBsum" id="8BWM"/>
<dbReference type="PDBsum" id="8BWN"/>
<dbReference type="PDBsum" id="8E3G"/>
<dbReference type="SMR" id="P43026"/>
<dbReference type="BioGRID" id="113839">
    <property type="interactions" value="34"/>
</dbReference>
<dbReference type="CORUM" id="P43026"/>
<dbReference type="DIP" id="DIP-5823N"/>
<dbReference type="FunCoup" id="P43026">
    <property type="interactions" value="699"/>
</dbReference>
<dbReference type="IntAct" id="P43026">
    <property type="interactions" value="28"/>
</dbReference>
<dbReference type="MINT" id="P43026"/>
<dbReference type="STRING" id="9606.ENSP00000363492"/>
<dbReference type="GlyCosmos" id="P43026">
    <property type="glycosylation" value="1 site, No reported glycans"/>
</dbReference>
<dbReference type="GlyGen" id="P43026">
    <property type="glycosylation" value="1 site"/>
</dbReference>
<dbReference type="iPTMnet" id="P43026"/>
<dbReference type="PhosphoSitePlus" id="P43026"/>
<dbReference type="SwissPalm" id="P43026"/>
<dbReference type="BioMuta" id="GDF5"/>
<dbReference type="DMDM" id="20141384"/>
<dbReference type="MassIVE" id="P43026"/>
<dbReference type="PaxDb" id="9606-ENSP00000363492"/>
<dbReference type="PeptideAtlas" id="P43026"/>
<dbReference type="ProteomicsDB" id="55574"/>
<dbReference type="Antibodypedia" id="2854">
    <property type="antibodies" value="405 antibodies from 32 providers"/>
</dbReference>
<dbReference type="DNASU" id="8200"/>
<dbReference type="Ensembl" id="ENST00000374369.8">
    <property type="protein sequence ID" value="ENSP00000363489.3"/>
    <property type="gene ID" value="ENSG00000125965.9"/>
</dbReference>
<dbReference type="Ensembl" id="ENST00000374372.1">
    <property type="protein sequence ID" value="ENSP00000363492.1"/>
    <property type="gene ID" value="ENSG00000125965.9"/>
</dbReference>
<dbReference type="GeneID" id="8200"/>
<dbReference type="KEGG" id="hsa:8200"/>
<dbReference type="MANE-Select" id="ENST00000374369.8">
    <property type="protein sequence ID" value="ENSP00000363489.3"/>
    <property type="RefSeq nucleotide sequence ID" value="NM_000557.5"/>
    <property type="RefSeq protein sequence ID" value="NP_000548.2"/>
</dbReference>
<dbReference type="UCSC" id="uc002xck.2">
    <property type="organism name" value="human"/>
</dbReference>
<dbReference type="AGR" id="HGNC:4220"/>
<dbReference type="CTD" id="8200"/>
<dbReference type="DisGeNET" id="8200"/>
<dbReference type="GeneCards" id="GDF5"/>
<dbReference type="HGNC" id="HGNC:4220">
    <property type="gene designation" value="GDF5"/>
</dbReference>
<dbReference type="HPA" id="ENSG00000125965">
    <property type="expression patterns" value="Tissue enriched (salivary)"/>
</dbReference>
<dbReference type="MalaCards" id="GDF5"/>
<dbReference type="MIM" id="112600">
    <property type="type" value="phenotype"/>
</dbReference>
<dbReference type="MIM" id="113100">
    <property type="type" value="phenotype"/>
</dbReference>
<dbReference type="MIM" id="200700">
    <property type="type" value="phenotype"/>
</dbReference>
<dbReference type="MIM" id="201250">
    <property type="type" value="phenotype"/>
</dbReference>
<dbReference type="MIM" id="228900">
    <property type="type" value="phenotype"/>
</dbReference>
<dbReference type="MIM" id="601146">
    <property type="type" value="gene"/>
</dbReference>
<dbReference type="MIM" id="610017">
    <property type="type" value="phenotype"/>
</dbReference>
<dbReference type="MIM" id="612400">
    <property type="type" value="phenotype"/>
</dbReference>
<dbReference type="MIM" id="615072">
    <property type="type" value="phenotype"/>
</dbReference>
<dbReference type="MIM" id="615298">
    <property type="type" value="phenotype"/>
</dbReference>
<dbReference type="neXtProt" id="NX_P43026"/>
<dbReference type="OpenTargets" id="ENSG00000125965"/>
<dbReference type="Orphanet" id="2098">
    <property type="disease" value="Acromesomelic dysplasia, Grebe type"/>
</dbReference>
<dbReference type="Orphanet" id="968">
    <property type="disease" value="Acromesomelic dysplasia, Hunter-Thompson type"/>
</dbReference>
<dbReference type="Orphanet" id="63442">
    <property type="disease" value="Angel-shaped phalango-epiphyseal dysplasia"/>
</dbReference>
<dbReference type="Orphanet" id="93388">
    <property type="disease" value="Brachydactyly type A1"/>
</dbReference>
<dbReference type="Orphanet" id="93396">
    <property type="disease" value="Brachydactyly type A2"/>
</dbReference>
<dbReference type="Orphanet" id="93384">
    <property type="disease" value="Brachydactyly type C"/>
</dbReference>
<dbReference type="Orphanet" id="2639">
    <property type="disease" value="Fibular aplasia-complex brachydactyly syndrome"/>
</dbReference>
<dbReference type="Orphanet" id="3237">
    <property type="disease" value="Multiple synostoses syndrome"/>
</dbReference>
<dbReference type="Orphanet" id="3250">
    <property type="disease" value="Proximal symphalangism"/>
</dbReference>
<dbReference type="PharmGKB" id="PA28635"/>
<dbReference type="VEuPathDB" id="HostDB:ENSG00000125965"/>
<dbReference type="eggNOG" id="KOG3900">
    <property type="taxonomic scope" value="Eukaryota"/>
</dbReference>
<dbReference type="GeneTree" id="ENSGT00940000160455"/>
<dbReference type="HOGENOM" id="CLU_020515_0_0_1"/>
<dbReference type="InParanoid" id="P43026"/>
<dbReference type="OMA" id="DTAKWEV"/>
<dbReference type="OrthoDB" id="5987191at2759"/>
<dbReference type="PAN-GO" id="P43026">
    <property type="GO annotations" value="5 GO annotations based on evolutionary models"/>
</dbReference>
<dbReference type="PhylomeDB" id="P43026"/>
<dbReference type="TreeFam" id="TF316134"/>
<dbReference type="PathwayCommons" id="P43026"/>
<dbReference type="Reactome" id="R-HSA-2129379">
    <property type="pathway name" value="Molecules associated with elastic fibres"/>
</dbReference>
<dbReference type="SignaLink" id="P43026"/>
<dbReference type="SIGNOR" id="P43026"/>
<dbReference type="BioGRID-ORCS" id="8200">
    <property type="hits" value="15 hits in 1145 CRISPR screens"/>
</dbReference>
<dbReference type="EvolutionaryTrace" id="P43026"/>
<dbReference type="GeneWiki" id="GDF5"/>
<dbReference type="GenomeRNAi" id="8200"/>
<dbReference type="Pharos" id="P43026">
    <property type="development level" value="Tbio"/>
</dbReference>
<dbReference type="PRO" id="PR:P43026"/>
<dbReference type="Proteomes" id="UP000005640">
    <property type="component" value="Chromosome 20"/>
</dbReference>
<dbReference type="RNAct" id="P43026">
    <property type="molecule type" value="protein"/>
</dbReference>
<dbReference type="Bgee" id="ENSG00000125965">
    <property type="expression patterns" value="Expressed in parotid gland and 108 other cell types or tissues"/>
</dbReference>
<dbReference type="ExpressionAtlas" id="P43026">
    <property type="expression patterns" value="baseline and differential"/>
</dbReference>
<dbReference type="GO" id="GO:0005576">
    <property type="term" value="C:extracellular region"/>
    <property type="evidence" value="ECO:0000304"/>
    <property type="project" value="Reactome"/>
</dbReference>
<dbReference type="GO" id="GO:0005615">
    <property type="term" value="C:extracellular space"/>
    <property type="evidence" value="ECO:0000318"/>
    <property type="project" value="GO_Central"/>
</dbReference>
<dbReference type="GO" id="GO:0005886">
    <property type="term" value="C:plasma membrane"/>
    <property type="evidence" value="ECO:0007669"/>
    <property type="project" value="UniProtKB-SubCell"/>
</dbReference>
<dbReference type="GO" id="GO:0036122">
    <property type="term" value="F:BMP binding"/>
    <property type="evidence" value="ECO:0000353"/>
    <property type="project" value="UniProtKB"/>
</dbReference>
<dbReference type="GO" id="GO:0005125">
    <property type="term" value="F:cytokine activity"/>
    <property type="evidence" value="ECO:0000318"/>
    <property type="project" value="GO_Central"/>
</dbReference>
<dbReference type="GO" id="GO:0008083">
    <property type="term" value="F:growth factor activity"/>
    <property type="evidence" value="ECO:0000304"/>
    <property type="project" value="ProtInc"/>
</dbReference>
<dbReference type="GO" id="GO:0042802">
    <property type="term" value="F:identical protein binding"/>
    <property type="evidence" value="ECO:0000353"/>
    <property type="project" value="IntAct"/>
</dbReference>
<dbReference type="GO" id="GO:0030509">
    <property type="term" value="P:BMP signaling pathway"/>
    <property type="evidence" value="ECO:0000314"/>
    <property type="project" value="UniProtKB"/>
</dbReference>
<dbReference type="GO" id="GO:0007267">
    <property type="term" value="P:cell-cell signaling"/>
    <property type="evidence" value="ECO:0000304"/>
    <property type="project" value="ProtInc"/>
</dbReference>
<dbReference type="GO" id="GO:0060591">
    <property type="term" value="P:chondroblast differentiation"/>
    <property type="evidence" value="ECO:0000314"/>
    <property type="project" value="UniProtKB"/>
</dbReference>
<dbReference type="GO" id="GO:0002062">
    <property type="term" value="P:chondrocyte differentiation"/>
    <property type="evidence" value="ECO:0007669"/>
    <property type="project" value="Ensembl"/>
</dbReference>
<dbReference type="GO" id="GO:0030326">
    <property type="term" value="P:embryonic limb morphogenesis"/>
    <property type="evidence" value="ECO:0007669"/>
    <property type="project" value="Ensembl"/>
</dbReference>
<dbReference type="GO" id="GO:0035136">
    <property type="term" value="P:forelimb morphogenesis"/>
    <property type="evidence" value="ECO:0007669"/>
    <property type="project" value="Ensembl"/>
</dbReference>
<dbReference type="GO" id="GO:0035137">
    <property type="term" value="P:hindlimb morphogenesis"/>
    <property type="evidence" value="ECO:0007669"/>
    <property type="project" value="Ensembl"/>
</dbReference>
<dbReference type="GO" id="GO:0097152">
    <property type="term" value="P:mesenchymal cell apoptotic process"/>
    <property type="evidence" value="ECO:0007669"/>
    <property type="project" value="Ensembl"/>
</dbReference>
<dbReference type="GO" id="GO:0032331">
    <property type="term" value="P:negative regulation of chondrocyte differentiation"/>
    <property type="evidence" value="ECO:0000314"/>
    <property type="project" value="UniProtKB"/>
</dbReference>
<dbReference type="GO" id="GO:0050680">
    <property type="term" value="P:negative regulation of epithelial cell proliferation"/>
    <property type="evidence" value="ECO:0000314"/>
    <property type="project" value="BHF-UCL"/>
</dbReference>
<dbReference type="GO" id="GO:2001054">
    <property type="term" value="P:negative regulation of mesenchymal cell apoptotic process"/>
    <property type="evidence" value="ECO:0007669"/>
    <property type="project" value="Ensembl"/>
</dbReference>
<dbReference type="GO" id="GO:0043524">
    <property type="term" value="P:negative regulation of neuron apoptotic process"/>
    <property type="evidence" value="ECO:0007669"/>
    <property type="project" value="Ensembl"/>
</dbReference>
<dbReference type="GO" id="GO:0043932">
    <property type="term" value="P:ossification involved in bone remodeling"/>
    <property type="evidence" value="ECO:0007669"/>
    <property type="project" value="Ensembl"/>
</dbReference>
<dbReference type="GO" id="GO:0030513">
    <property type="term" value="P:positive regulation of BMP signaling pathway"/>
    <property type="evidence" value="ECO:0000314"/>
    <property type="project" value="UniProtKB"/>
</dbReference>
<dbReference type="GO" id="GO:0032332">
    <property type="term" value="P:positive regulation of chondrocyte differentiation"/>
    <property type="evidence" value="ECO:0000314"/>
    <property type="project" value="UniProtKB"/>
</dbReference>
<dbReference type="GO" id="GO:0045666">
    <property type="term" value="P:positive regulation of neuron differentiation"/>
    <property type="evidence" value="ECO:0007669"/>
    <property type="project" value="Ensembl"/>
</dbReference>
<dbReference type="GO" id="GO:0060391">
    <property type="term" value="P:positive regulation of SMAD protein signal transduction"/>
    <property type="evidence" value="ECO:0000314"/>
    <property type="project" value="UniProtKB"/>
</dbReference>
<dbReference type="GO" id="GO:0040014">
    <property type="term" value="P:regulation of multicellular organism growth"/>
    <property type="evidence" value="ECO:0007669"/>
    <property type="project" value="Ensembl"/>
</dbReference>
<dbReference type="GO" id="GO:0009612">
    <property type="term" value="P:response to mechanical stimulus"/>
    <property type="evidence" value="ECO:0007669"/>
    <property type="project" value="Ensembl"/>
</dbReference>
<dbReference type="GO" id="GO:0007179">
    <property type="term" value="P:transforming growth factor beta receptor signaling pathway"/>
    <property type="evidence" value="ECO:0000304"/>
    <property type="project" value="ProtInc"/>
</dbReference>
<dbReference type="CDD" id="cd19399">
    <property type="entry name" value="TGF_beta_GDF5"/>
    <property type="match status" value="1"/>
</dbReference>
<dbReference type="FunFam" id="2.10.90.10:FF:000001">
    <property type="entry name" value="Bone morphogenetic protein 4"/>
    <property type="match status" value="1"/>
</dbReference>
<dbReference type="FunFam" id="2.60.120.970:FF:000011">
    <property type="entry name" value="Growth/differentiation factor 5"/>
    <property type="match status" value="1"/>
</dbReference>
<dbReference type="Gene3D" id="2.60.120.970">
    <property type="match status" value="1"/>
</dbReference>
<dbReference type="Gene3D" id="2.10.90.10">
    <property type="entry name" value="Cystine-knot cytokines"/>
    <property type="match status" value="1"/>
</dbReference>
<dbReference type="InterPro" id="IPR029034">
    <property type="entry name" value="Cystine-knot_cytokine"/>
</dbReference>
<dbReference type="InterPro" id="IPR001839">
    <property type="entry name" value="TGF-b_C"/>
</dbReference>
<dbReference type="InterPro" id="IPR001111">
    <property type="entry name" value="TGF-b_propeptide"/>
</dbReference>
<dbReference type="InterPro" id="IPR015615">
    <property type="entry name" value="TGF-beta-rel"/>
</dbReference>
<dbReference type="InterPro" id="IPR017948">
    <property type="entry name" value="TGFb_CS"/>
</dbReference>
<dbReference type="PANTHER" id="PTHR11848:SF44">
    <property type="entry name" value="GROWTH_DIFFERENTIATION FACTOR 5"/>
    <property type="match status" value="1"/>
</dbReference>
<dbReference type="PANTHER" id="PTHR11848">
    <property type="entry name" value="TGF-BETA FAMILY"/>
    <property type="match status" value="1"/>
</dbReference>
<dbReference type="Pfam" id="PF00019">
    <property type="entry name" value="TGF_beta"/>
    <property type="match status" value="1"/>
</dbReference>
<dbReference type="Pfam" id="PF00688">
    <property type="entry name" value="TGFb_propeptide"/>
    <property type="match status" value="1"/>
</dbReference>
<dbReference type="SMART" id="SM00204">
    <property type="entry name" value="TGFB"/>
    <property type="match status" value="1"/>
</dbReference>
<dbReference type="SUPFAM" id="SSF57501">
    <property type="entry name" value="Cystine-knot cytokines"/>
    <property type="match status" value="1"/>
</dbReference>
<dbReference type="PROSITE" id="PS00250">
    <property type="entry name" value="TGF_BETA_1"/>
    <property type="match status" value="1"/>
</dbReference>
<dbReference type="PROSITE" id="PS51362">
    <property type="entry name" value="TGF_BETA_2"/>
    <property type="match status" value="1"/>
</dbReference>
<comment type="function">
    <text evidence="2 5 9 19 20 22 24 25">Growth factor involved in bone and cartilage formation. During cartilage development regulates differentiation of chondrogenic tissue through two pathways. Firstly, positively regulates differentiation of chondrogenic tissue through its binding of high affinity with BMPR1B and of less affinity with BMPR1A, leading to induction of SMAD1-SMAD5-SMAD8 complex phosphorylation and then SMAD protein signaling transduction (PubMed:15530414, PubMed:21976273, PubMed:24098149, PubMed:25092592). Secondly, negatively regulates chondrogenic differentiation through its interaction with NOG (PubMed:21976273). Required to prevent excessive muscle loss upon denervation. This function requires SMAD4 and is mediated by phosphorylated SMAD1/5/8 (By similarity). Binds bacterial lipopolysaccharide (LPS) and mediates LPS-induced inflammatory response, including TNF secretion by monocytes (PubMed:11276205).</text>
</comment>
<comment type="subunit">
    <text evidence="2 5 17 19 20 22 24">Homodimer; disulfide-linked (By similarity). Interacts with serine proteases, HTRA1 and HTRA3 (By similarity). Following LPS binding, may form a complex with CXCR4, HSP90AA1 and HSPA8. Interacts with high affinity with NOG; inhibits chondrogenesis. Interacts with high affinity with BMPR1B and lower affinity with BMPR1A; positively regulates chondrocyte differentiation and induces SMAD dependent signaling. Interacts with FBN1 (via N-terminal domain) and FBN2 (PubMed:18339631). Interacts with TGFBR3 (PubMed:18184661).</text>
</comment>
<comment type="interaction">
    <interactant intactId="EBI-8571476">
        <id>P43026</id>
    </interactant>
    <interactant intactId="EBI-1029237">
        <id>P36894</id>
        <label>BMPR1A</label>
    </interactant>
    <organismsDiffer>false</organismsDiffer>
    <experiments>4</experiments>
</comment>
<comment type="interaction">
    <interactant intactId="EBI-8571476">
        <id>P43026</id>
    </interactant>
    <interactant intactId="EBI-7527193">
        <id>O00238</id>
        <label>BMPR1B</label>
    </interactant>
    <organismsDiffer>false</organismsDiffer>
    <experiments>7</experiments>
</comment>
<comment type="interaction">
    <interactant intactId="EBI-8571476">
        <id>P43026</id>
    </interactant>
    <interactant intactId="EBI-527196">
        <id>Q13873</id>
        <label>BMPR2</label>
    </interactant>
    <organismsDiffer>false</organismsDiffer>
    <experiments>4</experiments>
</comment>
<comment type="interaction">
    <interactant intactId="EBI-8571476">
        <id>P43026</id>
    </interactant>
    <interactant intactId="EBI-8571476">
        <id>P43026</id>
        <label>GDF5</label>
    </interactant>
    <organismsDiffer>false</organismsDiffer>
    <experiments>2</experiments>
</comment>
<comment type="interaction">
    <interactant intactId="EBI-11710512">
        <id>PRO_0000033913</id>
    </interactant>
    <interactant intactId="EBI-11700693">
        <id>P98066</id>
        <label>TNFAIP6</label>
    </interactant>
    <organismsDiffer>false</organismsDiffer>
    <experiments>3</experiments>
</comment>
<comment type="subcellular location">
    <subcellularLocation>
        <location evidence="5">Secreted</location>
    </subcellularLocation>
    <subcellularLocation>
        <location evidence="5">Cell membrane</location>
    </subcellularLocation>
</comment>
<comment type="tissue specificity">
    <text evidence="5">Predominantly expressed in long bones during embryonic development. Expressed in monocytes (at protein level).</text>
</comment>
<comment type="disease" evidence="30">
    <disease id="DI-00031">
        <name>Acromesomelic dysplasia 2A</name>
        <acronym>AMD2A</acronym>
        <description>A form of acromesomelic dysplasia, a skeletal disorder characterized by short stature, very short limbs and hand/foot malformations. The severity of limb abnormalities increases from proximal to distal with profoundly affected hands and feet showing brachydactyly and/or rudimentary fingers (knob-like fingers). AMD2A is an autosomal recessive form characterized by normal axial skeletons and missing or fused skeletal elements within the hands and feet.</description>
        <dbReference type="MIM" id="200700"/>
    </disease>
    <text>The disease is caused by variants affecting the gene represented in this entry.</text>
</comment>
<comment type="disease" evidence="29">
    <disease id="DI-00032">
        <name>Acromesomelic dysplasia 2C</name>
        <acronym>AMD2C</acronym>
        <description>A form of acromesomelic dysplasia, a skeletal disorder characterized by short stature, very short limbs and hand/foot malformations. The severity of limb abnormalities increases from proximal to distal with profoundly affected hands and feet showing brachydactyly and/or rudimentary fingers (knob-like fingers). AMD2C is an autosomal recessive form characterized by skeletal abnormalities restricted to the limbs. The craniofacial skeleton and axial skeletal structures are normal.</description>
        <dbReference type="MIM" id="201250"/>
    </disease>
    <text>The disease is caused by variants affecting the gene represented in this entry.</text>
</comment>
<comment type="disease" evidence="7 23 25 26">
    <disease id="DI-00197">
        <name>Brachydactyly C</name>
        <acronym>BDC</acronym>
        <description>A form of brachydactyly. Brachydactyly defines a group of inherited malformations characterized by shortening of the digits due to abnormal development of the phalanges and/or the metacarpals. Brachydactyly type C is characterized by deformity of the middle and proximal phalanges of the second and third fingers, sometimes with hypersegmentation of the proximal phalanx. The ring finger may be essentially normal and project beyond the others.</description>
        <dbReference type="MIM" id="113100"/>
    </disease>
    <text evidence="23">The disease is caused by variants affecting the gene represented in this entry. Some BDC patients with GDF5 mutations also manifest clinical features of ASPED angel-shaped phalango-epiphyseal dysplasia (ASPED), an autosomal dominant skeletal abnormality characterized by a typical angel-shaped phalanx, brachydactyly, specific radiological findings, abnormal dentition, hip dysplasia, and delayed bone age. This suggests that BDC and ASPED are part of the same clinical spectrum (PubMed:22828468).</text>
</comment>
<comment type="disease" evidence="6 11 18">
    <disease id="DI-01505">
        <name>Acromesomelic dysplasia 2B</name>
        <acronym>AMD2B</acronym>
        <description>A form of acromesomelic dysplasia, a skeletal disorder characterized by short stature, very short limbs and hand/foot malformations. The severity of limb abnormalities increases from proximal to distal with profoundly affected hands and feet showing brachydactyly and/or rudimentary fingers (knob-like fingers). AMD2B is an autosomal recessive form characterized by acromesomelic limb shortening with severe reduction or absence of the fibula, and severe hand and feet abnormalities including complex brachydactyly.</description>
        <dbReference type="MIM" id="228900"/>
    </disease>
    <text>The disease is caused by variants affecting the gene represented in this entry.</text>
</comment>
<comment type="disease" evidence="10 13 16">
    <disease id="DI-03804">
        <name>Symphalangism, proximal 1B</name>
        <acronym>SYM1B</acronym>
        <description>A disease characterized by the hereditary absence of the proximal interphalangeal joints. Distal interphalangeal joints are less frequently involved and metacarpophalangeal joints are rarely affected whereas carpal bone malformation and fusion are common. In the lower extremities, tarsal bone coalition is common. Conductive hearing loss is seen and is due to fusion of the stapes to the petrous part of the temporal bone.</description>
        <dbReference type="MIM" id="615298"/>
    </disease>
    <text>The disease is caused by variants affecting the gene represented in this entry.</text>
</comment>
<comment type="disease" evidence="12 20 22 24 31">
    <disease id="DI-02011">
        <name>Multiple synostoses syndrome 2</name>
        <acronym>SYNS2</acronym>
        <description>A bone disease characterized by multiple progressive joint fusions that commonly involve proximal interphalangeal, tarsal-carpal, humeroradial and cervical spine joints. Additional features can include progressive conductive deafness and facial dysmorphism.</description>
        <dbReference type="MIM" id="610017"/>
    </disease>
    <text>The disease is caused by variants affecting the gene represented in this entry.</text>
</comment>
<comment type="disease" evidence="10 15 22">
    <disease id="DI-00195">
        <name>Brachydactyly A2</name>
        <acronym>BDA2</acronym>
        <description>A form of brachydactyly. Brachydactyly defines a group of inherited malformations characterized by shortening of the digits due to abnormal development of the phalanges and/or the metacarpals. In brachydactyly type A2 shortening of the middle phalanges is confined to the index finger and the second toe, all other digits being more or less normal. Because of a rhomboid or triangular shape of the affected middle phalanx, the end of the second finger usually deviates radially.</description>
        <dbReference type="MIM" id="112600"/>
    </disease>
    <text>The disease is caused by variants affecting the gene represented in this entry.</text>
</comment>
<comment type="disease" evidence="14">
    <disease id="DI-02644">
        <name>Osteoarthritis 5</name>
        <acronym>OS5</acronym>
        <description>A degenerative disease of the joints characterized by degradation of the hyaline articular cartilage and remodeling of the subchondral bone with sclerosis. Clinical symptoms include pain and joint stiffness often leading to significant disability and joint replacement.</description>
        <dbReference type="MIM" id="612400"/>
    </disease>
    <text>Disease susceptibility is associated with variants affecting the gene represented in this entry.</text>
</comment>
<comment type="disease" evidence="21 24">
    <disease id="DI-03654">
        <name>Brachydactyly A1, C</name>
        <acronym>BDA1C</acronym>
        <description>A form of brachydactyly type A1. Brachydactyly defines a group of inherited malformations characterized by shortening of the digits due to abnormal development of the phalanges and/or the metacarpals. Brachydactyly type A1 is characterized by middle phalanges of all the digits rudimentary or fused with the terminal phalanges. The proximal phalanges of the thumbs and big toes are short. BDA1C inheritance can be autosomal dominant or autosomal recessive. Autosomal dominant BDA1C has a milder phenotype.</description>
        <dbReference type="MIM" id="615072"/>
    </disease>
    <text>The disease is caused by variants affecting the gene represented in this entry.</text>
</comment>
<comment type="similarity">
    <text evidence="32">Belongs to the TGF-beta family.</text>
</comment>
<comment type="sequence caution" evidence="32">
    <conflict type="erroneous gene model prediction">
        <sequence resource="EMBL-CDS" id="CAB89416"/>
    </conflict>
</comment>
<comment type="online information" name="Wikipedia">
    <link uri="https://en.wikipedia.org/wiki/GDF5"/>
    <text>GDF5 entry</text>
</comment>
<feature type="signal peptide" evidence="3">
    <location>
        <begin position="1"/>
        <end position="27"/>
    </location>
</feature>
<feature type="propeptide" id="PRO_0000033912" evidence="3">
    <location>
        <begin position="28"/>
        <end position="381"/>
    </location>
</feature>
<feature type="chain" id="PRO_0000033913" description="Growth/differentiation factor 5">
    <location>
        <begin position="382"/>
        <end position="501"/>
    </location>
</feature>
<feature type="region of interest" description="Disordered" evidence="4">
    <location>
        <begin position="29"/>
        <end position="169"/>
    </location>
</feature>
<feature type="region of interest" description="Disordered" evidence="4">
    <location>
        <begin position="246"/>
        <end position="265"/>
    </location>
</feature>
<feature type="compositionally biased region" description="Pro residues" evidence="4">
    <location>
        <begin position="99"/>
        <end position="111"/>
    </location>
</feature>
<feature type="compositionally biased region" description="Basic and acidic residues" evidence="4">
    <location>
        <begin position="148"/>
        <end position="162"/>
    </location>
</feature>
<feature type="glycosylation site" description="N-linked (GlcNAc...) asparagine" evidence="3">
    <location>
        <position position="189"/>
    </location>
</feature>
<feature type="disulfide bond" evidence="19">
    <location>
        <begin position="400"/>
        <end position="466"/>
    </location>
</feature>
<feature type="disulfide bond" evidence="19">
    <location>
        <begin position="429"/>
        <end position="498"/>
    </location>
</feature>
<feature type="disulfide bond" evidence="19">
    <location>
        <begin position="433"/>
        <end position="500"/>
    </location>
</feature>
<feature type="disulfide bond" description="Interchain" evidence="1">
    <location>
        <position position="465"/>
    </location>
</feature>
<feature type="sequence variant" id="VAR_037977" description="In dbSNP:rs34534075.">
    <original>R</original>
    <variation>G</variation>
    <location>
        <position position="163"/>
    </location>
</feature>
<feature type="sequence variant" id="VAR_037978" description="In BDC; dbSNP:rs28936397." evidence="7">
    <original>M</original>
    <variation>V</variation>
    <location>
        <position position="173"/>
    </location>
</feature>
<feature type="sequence variant" id="VAR_073139" description="In BDC; decrease of induction of SMAD protein signal transduction with either BMPR1A or BMPR1B; less induction of chondrgenesis; no phosphorylation of SMAD1-SMAD5-SMAD8 protein complex; reduction of protein level; abnormal proteolysis product." evidence="25">
    <original>T</original>
    <variation>P</variation>
    <location>
        <position position="201"/>
    </location>
</feature>
<feature type="sequence variant" id="VAR_074161" description="In BDC." evidence="26">
    <original>T</original>
    <variation>N</variation>
    <location>
        <position position="203"/>
    </location>
</feature>
<feature type="sequence variant" id="VAR_073140" description="In BDC; no induction of SMAD protein signal transduction via BMPR1A; less induction of chondrgenesis; no phosphorylation of SMAD1-SMAD5-SMAD8 protein complex; reduction of protein level; abnormal proteolysis product." evidence="25">
    <original>L</original>
    <variation>P</variation>
    <location>
        <position position="263"/>
    </location>
</feature>
<feature type="sequence variant" id="VAR_026120" description="In dbSNP:rs224331." evidence="8 28">
    <original>A</original>
    <variation>S</variation>
    <location>
        <position position="276"/>
    </location>
</feature>
<feature type="sequence variant" id="VAR_054909" description="In SYM1B; the mature GDF5 protein is detected as the wild-type in the supernatant derived from the mutant transfected cells; dbSNP:rs121909349." evidence="16">
    <original>L</original>
    <variation>R</variation>
    <location>
        <position position="373"/>
    </location>
</feature>
<feature type="sequence variant" id="VAR_054910" description="In AMD2B; dbSNP:rs121909350." evidence="18">
    <original>R</original>
    <variation>Q</variation>
    <location>
        <position position="378"/>
    </location>
</feature>
<feature type="sequence variant" id="VAR_046743" description="In BDA2; reduces activity; impairs processing; dbSNP:rs397514668." evidence="15">
    <original>R</original>
    <variation>Q</variation>
    <location>
        <position position="380"/>
    </location>
</feature>
<feature type="sequence variant" id="VAR_064416" description="In BDA1C; less effective than wild-type in stimulating chondrogenesis; impairs BMP signaling through BMPR1A; dbSNP:rs397514519." evidence="21 24">
    <original>R</original>
    <variation>C</variation>
    <location>
        <position position="399"/>
    </location>
</feature>
<feature type="sequence variant" id="VAR_017407" description="In AMD2A; dbSNP:rs74315387." evidence="30">
    <original>C</original>
    <variation>Y</variation>
    <location>
        <position position="400"/>
    </location>
</feature>
<feature type="sequence variant" id="VAR_073141" description="In SYNS2 and BDA1C; reduced interaction with NOG; reduces affinity to BMPR1A; impairs BMP signaling through BMPR1A; impairs chondrogenesis." evidence="24">
    <original>W</original>
    <variation>R</variation>
    <location>
        <position position="414"/>
    </location>
</feature>
<feature type="sequence variant" id="VAR_054911" description="In AMD2B; dbSNP:rs121909351." evidence="18">
    <original>P</original>
    <variation>T</variation>
    <location>
        <position position="436"/>
    </location>
</feature>
<feature type="sequence variant" id="VAR_037979" description="In AMD2B; located on the same allele as T-439 and L-440." evidence="11">
    <location>
        <position position="437"/>
    </location>
</feature>
<feature type="sequence variant" id="VAR_026545" description="In SYNS2 and SYM1B; increased biological activity when compared to wild-type; normal binding to BMPR1B ectodomain but increased binding to that of BMPR1A; dbSNP:rs74315388." evidence="10 12">
    <original>R</original>
    <variation>L</variation>
    <location>
        <position position="438"/>
    </location>
</feature>
<feature type="sequence variant" id="VAR_037980" description="In AMD2B; located on the same allele as L-437 del and L-440." evidence="11">
    <original>S</original>
    <variation>T</variation>
    <location>
        <position position="439"/>
    </location>
</feature>
<feature type="sequence variant" id="VAR_037981" description="In AMD2B; located on the same allele as L-437 del and T-439." evidence="11">
    <original>H</original>
    <variation>L</variation>
    <location>
        <position position="440"/>
    </location>
</feature>
<feature type="sequence variant" id="VAR_017408" description="In AMD2B, SYNS2 and BDA2; the mutant is almost inactive; loss of binding to BMPR1A and BMPR1B ectodomains; no induction of SMAD1-SMAD5-SMAD8 protein complex phosphorylation; impairs nuclear translocation of phosphotylated SMAD1-SMAD5-SMAD8 protein complex; no ability to induce SMAD protein signal transduction; binds to NOG; dbSNP:rs28936683." evidence="6 10 22">
    <original>L</original>
    <variation>P</variation>
    <location>
        <position position="441"/>
    </location>
</feature>
<feature type="sequence variant" id="VAR_073142" description="In SYNS2." evidence="20">
    <original>N</original>
    <variation>K</variation>
    <location>
        <position position="445"/>
    </location>
</feature>
<feature type="sequence variant" id="VAR_073143" description="In SYNS2; resistant to NOG inhibition; no change in binding with MPR1A and BMPR1B; strong induction of chondrogenesis." evidence="20">
    <original>N</original>
    <variation>T</variation>
    <location>
        <position position="445"/>
    </location>
</feature>
<feature type="sequence variant" id="VAR_037982" description="In SYNS2; reduction in binding affinity with BMPR2; no change in binding affinity with BMPR1A; no change in binding affinity with BMPR1B; decreases induction of SMAD1-SMAD5-SMAD8 protein complex phosphorylation; delay of phosphotylated SMAD1-SMAD5-SMAD8 protein complex nuclear translocation; strong reduction of SMAD protein signal transduction; reduction of chondrocyte differentiation; strong improvement of chondrogenesis; decrease of NOG binding; resistant to NOG inhibition; no chondrogenesis inhibition; dbSNP:rs121909347." evidence="22 31">
    <original>S</original>
    <variation>N</variation>
    <location>
        <position position="475"/>
    </location>
</feature>
<feature type="sequence variant" id="VAR_074162" description="In BDC." evidence="26">
    <original>V</original>
    <variation>M</variation>
    <location>
        <position position="486"/>
    </location>
</feature>
<feature type="sequence variant" id="VAR_037983" description="In SYM1B; dbSNP:rs74315389." evidence="13">
    <original>E</original>
    <variation>K</variation>
    <location>
        <position position="491"/>
    </location>
</feature>
<feature type="mutagenesis site" description="Resitant to NOG inhibition." evidence="27">
    <original>Y</original>
    <variation>N</variation>
    <location>
        <position position="490"/>
    </location>
</feature>
<feature type="sequence conflict" description="In Ref. 2; AAA57007." evidence="32" ref="2">
    <original>T</original>
    <variation>S</variation>
    <location>
        <position position="38"/>
    </location>
</feature>
<feature type="sequence conflict" description="In Ref. 2; AAA57007." evidence="32" ref="2">
    <original>APGGG</original>
    <variation>VPRSR</variation>
    <location>
        <begin position="254"/>
        <end position="258"/>
    </location>
</feature>
<feature type="sequence conflict" description="In Ref. 2; AAA57007." evidence="32" ref="2">
    <original>A</original>
    <variation>T</variation>
    <location>
        <position position="321"/>
    </location>
</feature>
<feature type="sequence conflict" description="In Ref. 2; AAA57007." evidence="32" ref="2">
    <original>L</original>
    <variation>S</variation>
    <location>
        <position position="384"/>
    </location>
</feature>
<feature type="strand" evidence="34">
    <location>
        <begin position="399"/>
        <end position="403"/>
    </location>
</feature>
<feature type="strand" evidence="34">
    <location>
        <begin position="406"/>
        <end position="408"/>
    </location>
</feature>
<feature type="turn" evidence="34">
    <location>
        <begin position="409"/>
        <end position="413"/>
    </location>
</feature>
<feature type="turn" evidence="34">
    <location>
        <begin position="415"/>
        <end position="417"/>
    </location>
</feature>
<feature type="strand" evidence="34">
    <location>
        <begin position="418"/>
        <end position="420"/>
    </location>
</feature>
<feature type="strand" evidence="34">
    <location>
        <begin position="422"/>
        <end position="425"/>
    </location>
</feature>
<feature type="strand" evidence="34">
    <location>
        <begin position="428"/>
        <end position="432"/>
    </location>
</feature>
<feature type="helix" evidence="34">
    <location>
        <begin position="439"/>
        <end position="441"/>
    </location>
</feature>
<feature type="helix" evidence="34">
    <location>
        <begin position="445"/>
        <end position="456"/>
    </location>
</feature>
<feature type="turn" evidence="34">
    <location>
        <begin position="458"/>
        <end position="460"/>
    </location>
</feature>
<feature type="strand" evidence="34">
    <location>
        <begin position="465"/>
        <end position="479"/>
    </location>
</feature>
<feature type="strand" evidence="33">
    <location>
        <begin position="481"/>
        <end position="483"/>
    </location>
</feature>
<feature type="strand" evidence="34">
    <location>
        <begin position="485"/>
        <end position="501"/>
    </location>
</feature>
<evidence type="ECO:0000250" key="1"/>
<evidence type="ECO:0000250" key="2">
    <source>
        <dbReference type="UniProtKB" id="P43027"/>
    </source>
</evidence>
<evidence type="ECO:0000255" key="3"/>
<evidence type="ECO:0000256" key="4">
    <source>
        <dbReference type="SAM" id="MobiDB-lite"/>
    </source>
</evidence>
<evidence type="ECO:0000269" key="5">
    <source>
    </source>
</evidence>
<evidence type="ECO:0000269" key="6">
    <source>
    </source>
</evidence>
<evidence type="ECO:0000269" key="7">
    <source>
    </source>
</evidence>
<evidence type="ECO:0000269" key="8">
    <source>
    </source>
</evidence>
<evidence type="ECO:0000269" key="9">
    <source>
    </source>
</evidence>
<evidence type="ECO:0000269" key="10">
    <source>
    </source>
</evidence>
<evidence type="ECO:0000269" key="11">
    <source>
    </source>
</evidence>
<evidence type="ECO:0000269" key="12">
    <source>
    </source>
</evidence>
<evidence type="ECO:0000269" key="13">
    <source>
    </source>
</evidence>
<evidence type="ECO:0000269" key="14">
    <source>
    </source>
</evidence>
<evidence type="ECO:0000269" key="15">
    <source>
    </source>
</evidence>
<evidence type="ECO:0000269" key="16">
    <source>
    </source>
</evidence>
<evidence type="ECO:0000269" key="17">
    <source>
    </source>
</evidence>
<evidence type="ECO:0000269" key="18">
    <source>
    </source>
</evidence>
<evidence type="ECO:0000269" key="19">
    <source>
    </source>
</evidence>
<evidence type="ECO:0000269" key="20">
    <source>
    </source>
</evidence>
<evidence type="ECO:0000269" key="21">
    <source>
    </source>
</evidence>
<evidence type="ECO:0000269" key="22">
    <source>
    </source>
</evidence>
<evidence type="ECO:0000269" key="23">
    <source>
    </source>
</evidence>
<evidence type="ECO:0000269" key="24">
    <source>
    </source>
</evidence>
<evidence type="ECO:0000269" key="25">
    <source>
    </source>
</evidence>
<evidence type="ECO:0000269" key="26">
    <source>
    </source>
</evidence>
<evidence type="ECO:0000269" key="27">
    <source>
    </source>
</evidence>
<evidence type="ECO:0000269" key="28">
    <source>
    </source>
</evidence>
<evidence type="ECO:0000269" key="29">
    <source>
    </source>
</evidence>
<evidence type="ECO:0000269" key="30">
    <source>
    </source>
</evidence>
<evidence type="ECO:0000269" key="31">
    <source ref="19"/>
</evidence>
<evidence type="ECO:0000305" key="32"/>
<evidence type="ECO:0007829" key="33">
    <source>
        <dbReference type="PDB" id="3QB4"/>
    </source>
</evidence>
<evidence type="ECO:0007829" key="34">
    <source>
        <dbReference type="PDB" id="7ZJF"/>
    </source>
</evidence>